<protein>
    <recommendedName>
        <fullName>Phosphate-binding protein PstS 3</fullName>
        <shortName>PBP 3</shortName>
        <shortName>PstS-3</shortName>
    </recommendedName>
</protein>
<organism>
    <name type="scientific">Mycobacterium leprae (strain TN)</name>
    <dbReference type="NCBI Taxonomy" id="272631"/>
    <lineage>
        <taxon>Bacteria</taxon>
        <taxon>Bacillati</taxon>
        <taxon>Actinomycetota</taxon>
        <taxon>Actinomycetes</taxon>
        <taxon>Mycobacteriales</taxon>
        <taxon>Mycobacteriaceae</taxon>
        <taxon>Mycobacterium</taxon>
    </lineage>
</organism>
<comment type="function">
    <text evidence="1">Part of the ABC transporter complex PstSACB involved in phosphate import.</text>
</comment>
<comment type="subunit">
    <text evidence="4">The complex is composed of two ATP-binding proteins (PstB), two transmembrane proteins (PstC and PstA) and a solute-binding protein (PstS).</text>
</comment>
<comment type="subcellular location">
    <subcellularLocation>
        <location evidence="4">Cell membrane</location>
        <topology evidence="4">Lipid-anchor</topology>
    </subcellularLocation>
</comment>
<comment type="similarity">
    <text evidence="4">Belongs to the PstS family.</text>
</comment>
<name>PSTS3_MYCLE</name>
<gene>
    <name type="primary">pstS2</name>
    <name type="synonym">phoS2</name>
    <name type="ordered locus">ML2095</name>
</gene>
<feature type="signal peptide" evidence="3">
    <location>
        <begin position="1"/>
        <end position="21"/>
    </location>
</feature>
<feature type="chain" id="PRO_0000031858" description="Phosphate-binding protein PstS 3">
    <location>
        <begin position="22"/>
        <end position="369"/>
    </location>
</feature>
<feature type="binding site" evidence="2">
    <location>
        <begin position="55"/>
        <end position="57"/>
    </location>
    <ligand>
        <name>phosphate</name>
        <dbReference type="ChEBI" id="CHEBI:43474"/>
    </ligand>
</feature>
<feature type="binding site" evidence="2">
    <location>
        <position position="85"/>
    </location>
    <ligand>
        <name>phosphate</name>
        <dbReference type="ChEBI" id="CHEBI:43474"/>
    </ligand>
</feature>
<feature type="binding site" evidence="2">
    <location>
        <position position="103"/>
    </location>
    <ligand>
        <name>phosphate</name>
        <dbReference type="ChEBI" id="CHEBI:43474"/>
    </ligand>
</feature>
<feature type="binding site" evidence="2">
    <location>
        <begin position="190"/>
        <end position="192"/>
    </location>
    <ligand>
        <name>phosphate</name>
        <dbReference type="ChEBI" id="CHEBI:43474"/>
    </ligand>
</feature>
<feature type="lipid moiety-binding region" description="N-palmitoyl cysteine" evidence="3">
    <location>
        <position position="22"/>
    </location>
</feature>
<feature type="lipid moiety-binding region" description="S-diacylglycerol cysteine" evidence="3">
    <location>
        <position position="22"/>
    </location>
</feature>
<proteinExistence type="inferred from homology"/>
<sequence>MKLNQFGAAIGLLATGALLSGCGSDNNAAVGSARTGPSSGQVSCGGKPTLKASGSTAQANAMTRFVNAFERSCPGQTLNYTANGSGAGVSEFNGNQTDFGGSDSPLSRKEYAAAEQRCGSQAWNLPVVFGPIAITYNVNGLSSLNLDGPTTAKIFNGSIASWNDPAIQALNTGVALPAEPIHVVFRNDESGTTDNFQRYLDVASNGEWGKGIGKTFKGGVGEGAKGNDGTSAAVKSTEGSITYNEWSFASARKLNTAKIATSADPEPIAISVDSVGKTISGATIIGEGNDLVLDTVSFYKPAQPGSYPIVLATYEIVCSKYPDAQVGRAVKAFLQSTIGGGQNGLGDNGYVPIPDSFKSRLSTAANAIA</sequence>
<reference key="1">
    <citation type="journal article" date="2001" name="Nature">
        <title>Massive gene decay in the leprosy bacillus.</title>
        <authorList>
            <person name="Cole S.T."/>
            <person name="Eiglmeier K."/>
            <person name="Parkhill J."/>
            <person name="James K.D."/>
            <person name="Thomson N.R."/>
            <person name="Wheeler P.R."/>
            <person name="Honore N."/>
            <person name="Garnier T."/>
            <person name="Churcher C.M."/>
            <person name="Harris D.E."/>
            <person name="Mungall K.L."/>
            <person name="Basham D."/>
            <person name="Brown D."/>
            <person name="Chillingworth T."/>
            <person name="Connor R."/>
            <person name="Davies R.M."/>
            <person name="Devlin K."/>
            <person name="Duthoy S."/>
            <person name="Feltwell T."/>
            <person name="Fraser A."/>
            <person name="Hamlin N."/>
            <person name="Holroyd S."/>
            <person name="Hornsby T."/>
            <person name="Jagels K."/>
            <person name="Lacroix C."/>
            <person name="Maclean J."/>
            <person name="Moule S."/>
            <person name="Murphy L.D."/>
            <person name="Oliver K."/>
            <person name="Quail M.A."/>
            <person name="Rajandream M.A."/>
            <person name="Rutherford K.M."/>
            <person name="Rutter S."/>
            <person name="Seeger K."/>
            <person name="Simon S."/>
            <person name="Simmonds M."/>
            <person name="Skelton J."/>
            <person name="Squares R."/>
            <person name="Squares S."/>
            <person name="Stevens K."/>
            <person name="Taylor K."/>
            <person name="Whitehead S."/>
            <person name="Woodward J.R."/>
            <person name="Barrell B.G."/>
        </authorList>
    </citation>
    <scope>NUCLEOTIDE SEQUENCE [LARGE SCALE GENOMIC DNA]</scope>
    <source>
        <strain>TN</strain>
    </source>
</reference>
<keyword id="KW-1003">Cell membrane</keyword>
<keyword id="KW-0449">Lipoprotein</keyword>
<keyword id="KW-0472">Membrane</keyword>
<keyword id="KW-0564">Palmitate</keyword>
<keyword id="KW-0592">Phosphate transport</keyword>
<keyword id="KW-1185">Reference proteome</keyword>
<keyword id="KW-0732">Signal</keyword>
<keyword id="KW-0813">Transport</keyword>
<evidence type="ECO:0000250" key="1"/>
<evidence type="ECO:0000250" key="2">
    <source>
        <dbReference type="UniProtKB" id="P9WGT7"/>
    </source>
</evidence>
<evidence type="ECO:0000255" key="3">
    <source>
        <dbReference type="PROSITE-ProRule" id="PRU00303"/>
    </source>
</evidence>
<evidence type="ECO:0000305" key="4"/>
<accession>Q9CBE5</accession>
<dbReference type="EMBL" id="AL583924">
    <property type="protein sequence ID" value="CAC31050.1"/>
    <property type="molecule type" value="Genomic_DNA"/>
</dbReference>
<dbReference type="PIR" id="B87171">
    <property type="entry name" value="B87171"/>
</dbReference>
<dbReference type="RefSeq" id="NP_302395.1">
    <property type="nucleotide sequence ID" value="NC_002677.1"/>
</dbReference>
<dbReference type="SMR" id="Q9CBE5"/>
<dbReference type="STRING" id="272631.gene:17575947"/>
<dbReference type="KEGG" id="mle:ML2095"/>
<dbReference type="PATRIC" id="fig|272631.5.peg.3941"/>
<dbReference type="Leproma" id="ML2095"/>
<dbReference type="eggNOG" id="COG0226">
    <property type="taxonomic scope" value="Bacteria"/>
</dbReference>
<dbReference type="HOGENOM" id="CLU_034528_0_0_11"/>
<dbReference type="OrthoDB" id="9801510at2"/>
<dbReference type="Proteomes" id="UP000000806">
    <property type="component" value="Chromosome"/>
</dbReference>
<dbReference type="GO" id="GO:0043190">
    <property type="term" value="C:ATP-binding cassette (ABC) transporter complex"/>
    <property type="evidence" value="ECO:0007669"/>
    <property type="project" value="InterPro"/>
</dbReference>
<dbReference type="GO" id="GO:0042301">
    <property type="term" value="F:phosphate ion binding"/>
    <property type="evidence" value="ECO:0007669"/>
    <property type="project" value="InterPro"/>
</dbReference>
<dbReference type="GO" id="GO:0035435">
    <property type="term" value="P:phosphate ion transmembrane transport"/>
    <property type="evidence" value="ECO:0007669"/>
    <property type="project" value="InterPro"/>
</dbReference>
<dbReference type="CDD" id="cd13565">
    <property type="entry name" value="PBP2_PstS"/>
    <property type="match status" value="1"/>
</dbReference>
<dbReference type="Gene3D" id="3.40.190.10">
    <property type="entry name" value="Periplasmic binding protein-like II"/>
    <property type="match status" value="2"/>
</dbReference>
<dbReference type="InterPro" id="IPR005673">
    <property type="entry name" value="ABC_phos-bd_PstS"/>
</dbReference>
<dbReference type="InterPro" id="IPR024370">
    <property type="entry name" value="PBP_domain"/>
</dbReference>
<dbReference type="InterPro" id="IPR050962">
    <property type="entry name" value="Phosphate-bind_PstS"/>
</dbReference>
<dbReference type="NCBIfam" id="TIGR00975">
    <property type="entry name" value="3a0107s03"/>
    <property type="match status" value="1"/>
</dbReference>
<dbReference type="PANTHER" id="PTHR42996">
    <property type="entry name" value="PHOSPHATE-BINDING PROTEIN PSTS"/>
    <property type="match status" value="1"/>
</dbReference>
<dbReference type="PANTHER" id="PTHR42996:SF1">
    <property type="entry name" value="PHOSPHATE-BINDING PROTEIN PSTS"/>
    <property type="match status" value="1"/>
</dbReference>
<dbReference type="Pfam" id="PF12849">
    <property type="entry name" value="PBP_like_2"/>
    <property type="match status" value="1"/>
</dbReference>
<dbReference type="PIRSF" id="PIRSF002756">
    <property type="entry name" value="PstS"/>
    <property type="match status" value="1"/>
</dbReference>
<dbReference type="SUPFAM" id="SSF53850">
    <property type="entry name" value="Periplasmic binding protein-like II"/>
    <property type="match status" value="1"/>
</dbReference>
<dbReference type="PROSITE" id="PS51257">
    <property type="entry name" value="PROKAR_LIPOPROTEIN"/>
    <property type="match status" value="1"/>
</dbReference>